<dbReference type="EMBL" id="AM039952">
    <property type="protein sequence ID" value="CAJ22629.1"/>
    <property type="molecule type" value="Genomic_DNA"/>
</dbReference>
<dbReference type="RefSeq" id="WP_008571672.1">
    <property type="nucleotide sequence ID" value="NZ_CP017190.1"/>
</dbReference>
<dbReference type="SMR" id="Q3BWY4"/>
<dbReference type="STRING" id="456327.BJD11_17745"/>
<dbReference type="GeneID" id="97509335"/>
<dbReference type="KEGG" id="xcv:XCV0998"/>
<dbReference type="eggNOG" id="COG0051">
    <property type="taxonomic scope" value="Bacteria"/>
</dbReference>
<dbReference type="HOGENOM" id="CLU_122625_1_3_6"/>
<dbReference type="Proteomes" id="UP000007069">
    <property type="component" value="Chromosome"/>
</dbReference>
<dbReference type="GO" id="GO:1990904">
    <property type="term" value="C:ribonucleoprotein complex"/>
    <property type="evidence" value="ECO:0007669"/>
    <property type="project" value="UniProtKB-KW"/>
</dbReference>
<dbReference type="GO" id="GO:0005840">
    <property type="term" value="C:ribosome"/>
    <property type="evidence" value="ECO:0007669"/>
    <property type="project" value="UniProtKB-KW"/>
</dbReference>
<dbReference type="GO" id="GO:0003735">
    <property type="term" value="F:structural constituent of ribosome"/>
    <property type="evidence" value="ECO:0007669"/>
    <property type="project" value="InterPro"/>
</dbReference>
<dbReference type="GO" id="GO:0000049">
    <property type="term" value="F:tRNA binding"/>
    <property type="evidence" value="ECO:0007669"/>
    <property type="project" value="UniProtKB-UniRule"/>
</dbReference>
<dbReference type="GO" id="GO:0006412">
    <property type="term" value="P:translation"/>
    <property type="evidence" value="ECO:0007669"/>
    <property type="project" value="UniProtKB-UniRule"/>
</dbReference>
<dbReference type="FunFam" id="3.30.70.600:FF:000001">
    <property type="entry name" value="30S ribosomal protein S10"/>
    <property type="match status" value="1"/>
</dbReference>
<dbReference type="Gene3D" id="3.30.70.600">
    <property type="entry name" value="Ribosomal protein S10 domain"/>
    <property type="match status" value="1"/>
</dbReference>
<dbReference type="HAMAP" id="MF_00508">
    <property type="entry name" value="Ribosomal_uS10"/>
    <property type="match status" value="1"/>
</dbReference>
<dbReference type="InterPro" id="IPR001848">
    <property type="entry name" value="Ribosomal_uS10"/>
</dbReference>
<dbReference type="InterPro" id="IPR018268">
    <property type="entry name" value="Ribosomal_uS10_CS"/>
</dbReference>
<dbReference type="InterPro" id="IPR027486">
    <property type="entry name" value="Ribosomal_uS10_dom"/>
</dbReference>
<dbReference type="InterPro" id="IPR036838">
    <property type="entry name" value="Ribosomal_uS10_dom_sf"/>
</dbReference>
<dbReference type="NCBIfam" id="NF001861">
    <property type="entry name" value="PRK00596.1"/>
    <property type="match status" value="1"/>
</dbReference>
<dbReference type="NCBIfam" id="TIGR01049">
    <property type="entry name" value="rpsJ_bact"/>
    <property type="match status" value="1"/>
</dbReference>
<dbReference type="PANTHER" id="PTHR11700">
    <property type="entry name" value="30S RIBOSOMAL PROTEIN S10 FAMILY MEMBER"/>
    <property type="match status" value="1"/>
</dbReference>
<dbReference type="Pfam" id="PF00338">
    <property type="entry name" value="Ribosomal_S10"/>
    <property type="match status" value="1"/>
</dbReference>
<dbReference type="PRINTS" id="PR00971">
    <property type="entry name" value="RIBOSOMALS10"/>
</dbReference>
<dbReference type="SMART" id="SM01403">
    <property type="entry name" value="Ribosomal_S10"/>
    <property type="match status" value="1"/>
</dbReference>
<dbReference type="SUPFAM" id="SSF54999">
    <property type="entry name" value="Ribosomal protein S10"/>
    <property type="match status" value="1"/>
</dbReference>
<dbReference type="PROSITE" id="PS00361">
    <property type="entry name" value="RIBOSOMAL_S10"/>
    <property type="match status" value="1"/>
</dbReference>
<sequence>MAEQKTGQKADQKIRIRLKAFDHRLIDRSASEIVETAKRTGAQVRGPIPLPTKIERYTILVSPHADKDARDQYETRTHKRVLDIIDPNDKTVDALMKLELAAGVDVQIKLT</sequence>
<reference key="1">
    <citation type="journal article" date="2005" name="J. Bacteriol.">
        <title>Insights into genome plasticity and pathogenicity of the plant pathogenic Bacterium Xanthomonas campestris pv. vesicatoria revealed by the complete genome sequence.</title>
        <authorList>
            <person name="Thieme F."/>
            <person name="Koebnik R."/>
            <person name="Bekel T."/>
            <person name="Berger C."/>
            <person name="Boch J."/>
            <person name="Buettner D."/>
            <person name="Caldana C."/>
            <person name="Gaigalat L."/>
            <person name="Goesmann A."/>
            <person name="Kay S."/>
            <person name="Kirchner O."/>
            <person name="Lanz C."/>
            <person name="Linke B."/>
            <person name="McHardy A.C."/>
            <person name="Meyer F."/>
            <person name="Mittenhuber G."/>
            <person name="Nies D.H."/>
            <person name="Niesbach-Kloesgen U."/>
            <person name="Patschkowski T."/>
            <person name="Rueckert C."/>
            <person name="Rupp O."/>
            <person name="Schneiker S."/>
            <person name="Schuster S.C."/>
            <person name="Vorhoelter F.J."/>
            <person name="Weber E."/>
            <person name="Puehler A."/>
            <person name="Bonas U."/>
            <person name="Bartels D."/>
            <person name="Kaiser O."/>
        </authorList>
    </citation>
    <scope>NUCLEOTIDE SEQUENCE [LARGE SCALE GENOMIC DNA]</scope>
    <source>
        <strain>85-10</strain>
    </source>
</reference>
<accession>Q3BWY4</accession>
<organism>
    <name type="scientific">Xanthomonas euvesicatoria pv. vesicatoria (strain 85-10)</name>
    <name type="common">Xanthomonas campestris pv. vesicatoria</name>
    <dbReference type="NCBI Taxonomy" id="316273"/>
    <lineage>
        <taxon>Bacteria</taxon>
        <taxon>Pseudomonadati</taxon>
        <taxon>Pseudomonadota</taxon>
        <taxon>Gammaproteobacteria</taxon>
        <taxon>Lysobacterales</taxon>
        <taxon>Lysobacteraceae</taxon>
        <taxon>Xanthomonas</taxon>
    </lineage>
</organism>
<keyword id="KW-0687">Ribonucleoprotein</keyword>
<keyword id="KW-0689">Ribosomal protein</keyword>
<gene>
    <name evidence="1" type="primary">rpsJ</name>
    <name type="ordered locus">XCV0998</name>
</gene>
<protein>
    <recommendedName>
        <fullName evidence="1">Small ribosomal subunit protein uS10</fullName>
    </recommendedName>
    <alternativeName>
        <fullName evidence="2">30S ribosomal protein S10</fullName>
    </alternativeName>
</protein>
<proteinExistence type="inferred from homology"/>
<feature type="chain" id="PRO_0000237118" description="Small ribosomal subunit protein uS10">
    <location>
        <begin position="1"/>
        <end position="111"/>
    </location>
</feature>
<evidence type="ECO:0000255" key="1">
    <source>
        <dbReference type="HAMAP-Rule" id="MF_00508"/>
    </source>
</evidence>
<evidence type="ECO:0000305" key="2"/>
<name>RS10_XANE5</name>
<comment type="function">
    <text evidence="1">Involved in the binding of tRNA to the ribosomes.</text>
</comment>
<comment type="subunit">
    <text evidence="1">Part of the 30S ribosomal subunit.</text>
</comment>
<comment type="similarity">
    <text evidence="1">Belongs to the universal ribosomal protein uS10 family.</text>
</comment>